<name>WHIA_BACAH</name>
<reference key="1">
    <citation type="journal article" date="2007" name="J. Bacteriol.">
        <title>The complete genome sequence of Bacillus thuringiensis Al Hakam.</title>
        <authorList>
            <person name="Challacombe J.F."/>
            <person name="Altherr M.R."/>
            <person name="Xie G."/>
            <person name="Bhotika S.S."/>
            <person name="Brown N."/>
            <person name="Bruce D."/>
            <person name="Campbell C.S."/>
            <person name="Campbell M.L."/>
            <person name="Chen J."/>
            <person name="Chertkov O."/>
            <person name="Cleland C."/>
            <person name="Dimitrijevic M."/>
            <person name="Doggett N.A."/>
            <person name="Fawcett J.J."/>
            <person name="Glavina T."/>
            <person name="Goodwin L.A."/>
            <person name="Green L.D."/>
            <person name="Han C.S."/>
            <person name="Hill K.K."/>
            <person name="Hitchcock P."/>
            <person name="Jackson P.J."/>
            <person name="Keim P."/>
            <person name="Kewalramani A.R."/>
            <person name="Longmire J."/>
            <person name="Lucas S."/>
            <person name="Malfatti S."/>
            <person name="Martinez D."/>
            <person name="McMurry K."/>
            <person name="Meincke L.J."/>
            <person name="Misra M."/>
            <person name="Moseman B.L."/>
            <person name="Mundt M."/>
            <person name="Munk A.C."/>
            <person name="Okinaka R.T."/>
            <person name="Parson-Quintana B."/>
            <person name="Reilly L.P."/>
            <person name="Richardson P."/>
            <person name="Robinson D.L."/>
            <person name="Saunders E."/>
            <person name="Tapia R."/>
            <person name="Tesmer J.G."/>
            <person name="Thayer N."/>
            <person name="Thompson L.S."/>
            <person name="Tice H."/>
            <person name="Ticknor L.O."/>
            <person name="Wills P.L."/>
            <person name="Gilna P."/>
            <person name="Brettin T.S."/>
        </authorList>
    </citation>
    <scope>NUCLEOTIDE SEQUENCE [LARGE SCALE GENOMIC DNA]</scope>
    <source>
        <strain>Al Hakam</strain>
    </source>
</reference>
<organism>
    <name type="scientific">Bacillus thuringiensis (strain Al Hakam)</name>
    <dbReference type="NCBI Taxonomy" id="412694"/>
    <lineage>
        <taxon>Bacteria</taxon>
        <taxon>Bacillati</taxon>
        <taxon>Bacillota</taxon>
        <taxon>Bacilli</taxon>
        <taxon>Bacillales</taxon>
        <taxon>Bacillaceae</taxon>
        <taxon>Bacillus</taxon>
        <taxon>Bacillus cereus group</taxon>
    </lineage>
</organism>
<protein>
    <recommendedName>
        <fullName evidence="1">Probable cell division protein WhiA</fullName>
    </recommendedName>
</protein>
<dbReference type="EMBL" id="CP000485">
    <property type="protein sequence ID" value="ABK87833.1"/>
    <property type="status" value="ALT_INIT"/>
    <property type="molecule type" value="Genomic_DNA"/>
</dbReference>
<dbReference type="SMR" id="A0RKU0"/>
<dbReference type="KEGG" id="btl:BALH_4644"/>
<dbReference type="HOGENOM" id="CLU_053282_0_0_9"/>
<dbReference type="GO" id="GO:0003677">
    <property type="term" value="F:DNA binding"/>
    <property type="evidence" value="ECO:0007669"/>
    <property type="project" value="UniProtKB-UniRule"/>
</dbReference>
<dbReference type="GO" id="GO:0051301">
    <property type="term" value="P:cell division"/>
    <property type="evidence" value="ECO:0007669"/>
    <property type="project" value="UniProtKB-UniRule"/>
</dbReference>
<dbReference type="GO" id="GO:0043937">
    <property type="term" value="P:regulation of sporulation"/>
    <property type="evidence" value="ECO:0007669"/>
    <property type="project" value="InterPro"/>
</dbReference>
<dbReference type="FunFam" id="3.10.28.10:FF:000002">
    <property type="entry name" value="Probable cell division protein WhiA"/>
    <property type="match status" value="1"/>
</dbReference>
<dbReference type="Gene3D" id="3.10.28.10">
    <property type="entry name" value="Homing endonucleases"/>
    <property type="match status" value="1"/>
</dbReference>
<dbReference type="HAMAP" id="MF_01420">
    <property type="entry name" value="HTH_type_WhiA"/>
    <property type="match status" value="1"/>
</dbReference>
<dbReference type="InterPro" id="IPR027434">
    <property type="entry name" value="Homing_endonucl"/>
</dbReference>
<dbReference type="InterPro" id="IPR018478">
    <property type="entry name" value="Sporu_reg_WhiA_N_dom"/>
</dbReference>
<dbReference type="InterPro" id="IPR003802">
    <property type="entry name" value="Sporulation_regulator_WhiA"/>
</dbReference>
<dbReference type="InterPro" id="IPR023054">
    <property type="entry name" value="Sporulation_regulator_WhiA_C"/>
</dbReference>
<dbReference type="InterPro" id="IPR039518">
    <property type="entry name" value="WhiA_LAGLIDADG_dom"/>
</dbReference>
<dbReference type="NCBIfam" id="TIGR00647">
    <property type="entry name" value="DNA_bind_WhiA"/>
    <property type="match status" value="1"/>
</dbReference>
<dbReference type="PANTHER" id="PTHR37307">
    <property type="entry name" value="CELL DIVISION PROTEIN WHIA-RELATED"/>
    <property type="match status" value="1"/>
</dbReference>
<dbReference type="PANTHER" id="PTHR37307:SF1">
    <property type="entry name" value="CELL DIVISION PROTEIN WHIA-RELATED"/>
    <property type="match status" value="1"/>
</dbReference>
<dbReference type="Pfam" id="PF02650">
    <property type="entry name" value="HTH_WhiA"/>
    <property type="match status" value="1"/>
</dbReference>
<dbReference type="Pfam" id="PF14527">
    <property type="entry name" value="LAGLIDADG_WhiA"/>
    <property type="match status" value="1"/>
</dbReference>
<dbReference type="Pfam" id="PF10298">
    <property type="entry name" value="WhiA_N"/>
    <property type="match status" value="1"/>
</dbReference>
<dbReference type="SUPFAM" id="SSF55608">
    <property type="entry name" value="Homing endonucleases"/>
    <property type="match status" value="1"/>
</dbReference>
<gene>
    <name evidence="1" type="primary">whiA</name>
    <name type="ordered locus">BALH_4644</name>
</gene>
<evidence type="ECO:0000255" key="1">
    <source>
        <dbReference type="HAMAP-Rule" id="MF_01420"/>
    </source>
</evidence>
<evidence type="ECO:0000305" key="2"/>
<comment type="function">
    <text evidence="1">Involved in cell division and chromosome segregation.</text>
</comment>
<comment type="similarity">
    <text evidence="1">Belongs to the WhiA family.</text>
</comment>
<comment type="sequence caution" evidence="2">
    <conflict type="erroneous initiation">
        <sequence resource="EMBL-CDS" id="ABK87833"/>
    </conflict>
</comment>
<feature type="chain" id="PRO_0000376443" description="Probable cell division protein WhiA">
    <location>
        <begin position="1"/>
        <end position="317"/>
    </location>
</feature>
<feature type="DNA-binding region" description="H-T-H motif" evidence="1">
    <location>
        <begin position="276"/>
        <end position="310"/>
    </location>
</feature>
<keyword id="KW-0131">Cell cycle</keyword>
<keyword id="KW-0132">Cell division</keyword>
<keyword id="KW-0238">DNA-binding</keyword>
<proteinExistence type="inferred from homology"/>
<accession>A0RKU0</accession>
<sequence length="317" mass="36465">MVSFASETKKELTNLEMKECCEKAELSALLRMNGSLSFSNRRLSIDIQTENAAIARRIYTLLKKGYDVTVELLVRKKMRLKKNNVYIVRLVEKSREILADLHIVRDDFSFIRNISQELIEKKCCKRSYLRGAFLAGGSVNNPETSSYHLEIFSLYKEHNDAICELMNGFDLNSKTLERRKGYITYLKEAEKITEFLNIIGAHNALLRFEDIRIVRDMRNSVNRLVNCETANLNKTIGAALRQIENIRYIDETVGLDILPDKLREIAQLRRDYQDVTLKELGEMVSGGKISKSGINHRLRKIDDIAEKLRAGETVAKK</sequence>